<accession>P35144</accession>
<accession>D5DNA9</accession>
<keyword id="KW-0963">Cytoplasm</keyword>
<keyword id="KW-0312">Gluconeogenesis</keyword>
<keyword id="KW-0324">Glycolysis</keyword>
<keyword id="KW-0413">Isomerase</keyword>
<keyword id="KW-0597">Phosphoprotein</keyword>
<protein>
    <recommendedName>
        <fullName evidence="1">Triosephosphate isomerase</fullName>
        <shortName evidence="1">TIM</shortName>
        <shortName evidence="1">TPI</shortName>
        <ecNumber evidence="1">5.3.1.1</ecNumber>
    </recommendedName>
    <alternativeName>
        <fullName evidence="1">Triose-phosphate isomerase</fullName>
    </alternativeName>
</protein>
<organism>
    <name type="scientific">Priestia megaterium (strain DSM 319 / IMG 1521)</name>
    <name type="common">Bacillus megaterium</name>
    <dbReference type="NCBI Taxonomy" id="592022"/>
    <lineage>
        <taxon>Bacteria</taxon>
        <taxon>Bacillati</taxon>
        <taxon>Bacillota</taxon>
        <taxon>Bacilli</taxon>
        <taxon>Bacillales</taxon>
        <taxon>Bacillaceae</taxon>
        <taxon>Priestia</taxon>
    </lineage>
</organism>
<proteinExistence type="inferred from homology"/>
<name>TPIS_PRIM3</name>
<dbReference type="EC" id="5.3.1.1" evidence="1"/>
<dbReference type="EMBL" id="M87647">
    <property type="protein sequence ID" value="AAA73204.1"/>
    <property type="molecule type" value="Genomic_DNA"/>
</dbReference>
<dbReference type="EMBL" id="M87648">
    <property type="protein sequence ID" value="AAA73207.1"/>
    <property type="molecule type" value="Genomic_DNA"/>
</dbReference>
<dbReference type="EMBL" id="CP001982">
    <property type="protein sequence ID" value="ADF41836.1"/>
    <property type="molecule type" value="Genomic_DNA"/>
</dbReference>
<dbReference type="PIR" id="JQ1955">
    <property type="entry name" value="JQ1955"/>
</dbReference>
<dbReference type="RefSeq" id="WP_013085385.1">
    <property type="nucleotide sequence ID" value="NZ_CP120609.1"/>
</dbReference>
<dbReference type="SMR" id="P35144"/>
<dbReference type="GeneID" id="93645508"/>
<dbReference type="KEGG" id="bmd:BMD_5036"/>
<dbReference type="HOGENOM" id="CLU_024251_2_3_9"/>
<dbReference type="BRENDA" id="5.3.1.1">
    <property type="organism ID" value="656"/>
</dbReference>
<dbReference type="UniPathway" id="UPA00109">
    <property type="reaction ID" value="UER00189"/>
</dbReference>
<dbReference type="UniPathway" id="UPA00138"/>
<dbReference type="Proteomes" id="UP000002365">
    <property type="component" value="Chromosome"/>
</dbReference>
<dbReference type="GO" id="GO:0005829">
    <property type="term" value="C:cytosol"/>
    <property type="evidence" value="ECO:0007669"/>
    <property type="project" value="TreeGrafter"/>
</dbReference>
<dbReference type="GO" id="GO:0004807">
    <property type="term" value="F:triose-phosphate isomerase activity"/>
    <property type="evidence" value="ECO:0007669"/>
    <property type="project" value="UniProtKB-UniRule"/>
</dbReference>
<dbReference type="GO" id="GO:0006094">
    <property type="term" value="P:gluconeogenesis"/>
    <property type="evidence" value="ECO:0007669"/>
    <property type="project" value="UniProtKB-UniRule"/>
</dbReference>
<dbReference type="GO" id="GO:0046166">
    <property type="term" value="P:glyceraldehyde-3-phosphate biosynthetic process"/>
    <property type="evidence" value="ECO:0007669"/>
    <property type="project" value="TreeGrafter"/>
</dbReference>
<dbReference type="GO" id="GO:0019563">
    <property type="term" value="P:glycerol catabolic process"/>
    <property type="evidence" value="ECO:0007669"/>
    <property type="project" value="TreeGrafter"/>
</dbReference>
<dbReference type="GO" id="GO:0006096">
    <property type="term" value="P:glycolytic process"/>
    <property type="evidence" value="ECO:0007669"/>
    <property type="project" value="UniProtKB-UniRule"/>
</dbReference>
<dbReference type="CDD" id="cd00311">
    <property type="entry name" value="TIM"/>
    <property type="match status" value="1"/>
</dbReference>
<dbReference type="FunFam" id="3.20.20.70:FF:000016">
    <property type="entry name" value="Triosephosphate isomerase"/>
    <property type="match status" value="1"/>
</dbReference>
<dbReference type="Gene3D" id="3.20.20.70">
    <property type="entry name" value="Aldolase class I"/>
    <property type="match status" value="1"/>
</dbReference>
<dbReference type="HAMAP" id="MF_00147_B">
    <property type="entry name" value="TIM_B"/>
    <property type="match status" value="1"/>
</dbReference>
<dbReference type="InterPro" id="IPR013785">
    <property type="entry name" value="Aldolase_TIM"/>
</dbReference>
<dbReference type="InterPro" id="IPR035990">
    <property type="entry name" value="TIM_sf"/>
</dbReference>
<dbReference type="InterPro" id="IPR022896">
    <property type="entry name" value="TrioseP_Isoase_bac/euk"/>
</dbReference>
<dbReference type="InterPro" id="IPR000652">
    <property type="entry name" value="Triosephosphate_isomerase"/>
</dbReference>
<dbReference type="InterPro" id="IPR020861">
    <property type="entry name" value="Triosephosphate_isomerase_AS"/>
</dbReference>
<dbReference type="NCBIfam" id="TIGR00419">
    <property type="entry name" value="tim"/>
    <property type="match status" value="1"/>
</dbReference>
<dbReference type="PANTHER" id="PTHR21139">
    <property type="entry name" value="TRIOSEPHOSPHATE ISOMERASE"/>
    <property type="match status" value="1"/>
</dbReference>
<dbReference type="PANTHER" id="PTHR21139:SF42">
    <property type="entry name" value="TRIOSEPHOSPHATE ISOMERASE"/>
    <property type="match status" value="1"/>
</dbReference>
<dbReference type="Pfam" id="PF00121">
    <property type="entry name" value="TIM"/>
    <property type="match status" value="1"/>
</dbReference>
<dbReference type="SUPFAM" id="SSF51351">
    <property type="entry name" value="Triosephosphate isomerase (TIM)"/>
    <property type="match status" value="1"/>
</dbReference>
<dbReference type="PROSITE" id="PS00171">
    <property type="entry name" value="TIM_1"/>
    <property type="match status" value="1"/>
</dbReference>
<dbReference type="PROSITE" id="PS51440">
    <property type="entry name" value="TIM_2"/>
    <property type="match status" value="1"/>
</dbReference>
<feature type="chain" id="PRO_0000090177" description="Triosephosphate isomerase">
    <location>
        <begin position="1"/>
        <end position="251"/>
    </location>
</feature>
<feature type="active site" description="Electrophile" evidence="1">
    <location>
        <position position="95"/>
    </location>
</feature>
<feature type="active site" description="Proton acceptor" evidence="1">
    <location>
        <position position="167"/>
    </location>
</feature>
<feature type="binding site" evidence="1">
    <location>
        <begin position="9"/>
        <end position="11"/>
    </location>
    <ligand>
        <name>substrate</name>
    </ligand>
</feature>
<feature type="binding site" evidence="1">
    <location>
        <position position="173"/>
    </location>
    <ligand>
        <name>substrate</name>
    </ligand>
</feature>
<feature type="binding site" evidence="1">
    <location>
        <position position="213"/>
    </location>
    <ligand>
        <name>substrate</name>
    </ligand>
</feature>
<feature type="binding site" evidence="1">
    <location>
        <begin position="234"/>
        <end position="235"/>
    </location>
    <ligand>
        <name>substrate</name>
    </ligand>
</feature>
<feature type="modified residue" description="Phosphoserine" evidence="1">
    <location>
        <position position="213"/>
    </location>
</feature>
<comment type="function">
    <text evidence="1">Involved in the gluconeogenesis. Catalyzes stereospecifically the conversion of dihydroxyacetone phosphate (DHAP) to D-glyceraldehyde-3-phosphate (G3P).</text>
</comment>
<comment type="catalytic activity">
    <reaction evidence="1">
        <text>D-glyceraldehyde 3-phosphate = dihydroxyacetone phosphate</text>
        <dbReference type="Rhea" id="RHEA:18585"/>
        <dbReference type="ChEBI" id="CHEBI:57642"/>
        <dbReference type="ChEBI" id="CHEBI:59776"/>
        <dbReference type="EC" id="5.3.1.1"/>
    </reaction>
</comment>
<comment type="pathway">
    <text evidence="1">Carbohydrate biosynthesis; gluconeogenesis.</text>
</comment>
<comment type="pathway">
    <text evidence="1">Carbohydrate degradation; glycolysis; D-glyceraldehyde 3-phosphate from glycerone phosphate: step 1/1.</text>
</comment>
<comment type="subunit">
    <text evidence="1">Homodimer.</text>
</comment>
<comment type="subcellular location">
    <subcellularLocation>
        <location evidence="1">Cytoplasm</location>
    </subcellularLocation>
</comment>
<comment type="similarity">
    <text evidence="1">Belongs to the triosephosphate isomerase family.</text>
</comment>
<reference key="1">
    <citation type="journal article" date="1992" name="Gene">
        <title>Cloning and sequencing of the genes encoding glyceraldehyde-3-phosphate dehydrogenase, phosphoglycerate kinase and triosephosphate isomerase (gap operon) from mesophilic Bacillus megaterium: comparison with corresponding sequences from thermophilic Bacillus stearothermophilus.</title>
        <authorList>
            <person name="Schlaepfer B.S."/>
            <person name="Zuber H."/>
        </authorList>
    </citation>
    <scope>NUCLEOTIDE SEQUENCE [GENOMIC DNA]</scope>
</reference>
<reference key="2">
    <citation type="journal article" date="2011" name="J. Bacteriol.">
        <title>Genome sequences of the biotechnologically important Bacillus megaterium strains QM B1551 and DSM319.</title>
        <authorList>
            <person name="Eppinger M."/>
            <person name="Bunk B."/>
            <person name="Johns M.A."/>
            <person name="Edirisinghe J.N."/>
            <person name="Kutumbaka K.K."/>
            <person name="Koenig S.S."/>
            <person name="Creasy H.H."/>
            <person name="Rosovitz M.J."/>
            <person name="Riley D.R."/>
            <person name="Daugherty S."/>
            <person name="Martin M."/>
            <person name="Elbourne L.D."/>
            <person name="Paulsen I."/>
            <person name="Biedendieck R."/>
            <person name="Braun C."/>
            <person name="Grayburn S."/>
            <person name="Dhingra S."/>
            <person name="Lukyanchuk V."/>
            <person name="Ball B."/>
            <person name="Ul-Qamar R."/>
            <person name="Seibel J."/>
            <person name="Bremer E."/>
            <person name="Jahn D."/>
            <person name="Ravel J."/>
            <person name="Vary P.S."/>
        </authorList>
    </citation>
    <scope>NUCLEOTIDE SEQUENCE [LARGE SCALE GENOMIC DNA]</scope>
    <source>
        <strain>DSM 319 / IMG 1521</strain>
    </source>
</reference>
<sequence>MRKPIIAGNWKMNKVLSEATSFVEEVKGAVPSPESVDSVVCAPALFLDRLVEATKGTDLKIGAQNMHFEENGAFTGEVSPVALADLGVNYVILGHSERREMFAETDETVNQKTIAAFKHGLTPIVCCGETNEEYEQDQTKTVVANQVQKALAGLTDEQVKQTVIAYEPIWAIGTGKSSTAEGANEVCAYIRSVVAEQFSQDVADAVRIQYGGSVKPANIKEYMSQSDIDGALVGGASLEADSFLQLLEAGK</sequence>
<evidence type="ECO:0000255" key="1">
    <source>
        <dbReference type="HAMAP-Rule" id="MF_00147"/>
    </source>
</evidence>
<gene>
    <name evidence="1" type="primary">tpiA</name>
    <name type="synonym">tpi</name>
    <name type="ordered locus">BMD_5036</name>
</gene>